<accession>Q39DH2</accession>
<reference key="1">
    <citation type="submission" date="2005-10" db="EMBL/GenBank/DDBJ databases">
        <title>Complete sequence of chromosome 1 of Burkholderia sp. 383.</title>
        <authorList>
            <consortium name="US DOE Joint Genome Institute"/>
            <person name="Copeland A."/>
            <person name="Lucas S."/>
            <person name="Lapidus A."/>
            <person name="Barry K."/>
            <person name="Detter J.C."/>
            <person name="Glavina T."/>
            <person name="Hammon N."/>
            <person name="Israni S."/>
            <person name="Pitluck S."/>
            <person name="Chain P."/>
            <person name="Malfatti S."/>
            <person name="Shin M."/>
            <person name="Vergez L."/>
            <person name="Schmutz J."/>
            <person name="Larimer F."/>
            <person name="Land M."/>
            <person name="Kyrpides N."/>
            <person name="Lykidis A."/>
            <person name="Richardson P."/>
        </authorList>
    </citation>
    <scope>NUCLEOTIDE SEQUENCE [LARGE SCALE GENOMIC DNA]</scope>
    <source>
        <strain>ATCC 17760 / DSM 23089 / LMG 22485 / NCIMB 9086 / R18194 / 383</strain>
    </source>
</reference>
<gene>
    <name evidence="1" type="primary">pdxH</name>
    <name type="ordered locus">Bcep18194_A5900</name>
</gene>
<keyword id="KW-0285">Flavoprotein</keyword>
<keyword id="KW-0288">FMN</keyword>
<keyword id="KW-0560">Oxidoreductase</keyword>
<keyword id="KW-0664">Pyridoxine biosynthesis</keyword>
<sequence length="214" mass="24312">MTTLADLRINYSRASLDEADVAHDPFAQFDRWFKEALAAKLPEPNTMTLATVGDDGRPSARIVLIKGVDERGFVFFTNYESRKGRDLAAHPQAALLFYWIELERQVRIEGRIEKTSAEESDRYFASRPLGSRIGAWASEQSAVIDSRATLEAQEQAVSERYGDNPPRPPHWGGYRLVPDSIEFWQGRPSRLHDRLLYTRDADTSPSWSISRLSP</sequence>
<feature type="chain" id="PRO_0000255859" description="Pyridoxine/pyridoxamine 5'-phosphate oxidase">
    <location>
        <begin position="1"/>
        <end position="214"/>
    </location>
</feature>
<feature type="binding site" evidence="1">
    <location>
        <begin position="8"/>
        <end position="11"/>
    </location>
    <ligand>
        <name>substrate</name>
    </ligand>
</feature>
<feature type="binding site" evidence="1">
    <location>
        <begin position="61"/>
        <end position="66"/>
    </location>
    <ligand>
        <name>FMN</name>
        <dbReference type="ChEBI" id="CHEBI:58210"/>
    </ligand>
</feature>
<feature type="binding site" evidence="1">
    <location>
        <position position="66"/>
    </location>
    <ligand>
        <name>substrate</name>
    </ligand>
</feature>
<feature type="binding site" evidence="1">
    <location>
        <begin position="76"/>
        <end position="77"/>
    </location>
    <ligand>
        <name>FMN</name>
        <dbReference type="ChEBI" id="CHEBI:58210"/>
    </ligand>
</feature>
<feature type="binding site" evidence="1">
    <location>
        <position position="82"/>
    </location>
    <ligand>
        <name>FMN</name>
        <dbReference type="ChEBI" id="CHEBI:58210"/>
    </ligand>
</feature>
<feature type="binding site" evidence="1">
    <location>
        <position position="83"/>
    </location>
    <ligand>
        <name>FMN</name>
        <dbReference type="ChEBI" id="CHEBI:58210"/>
    </ligand>
</feature>
<feature type="binding site" evidence="1">
    <location>
        <position position="105"/>
    </location>
    <ligand>
        <name>FMN</name>
        <dbReference type="ChEBI" id="CHEBI:58210"/>
    </ligand>
</feature>
<feature type="binding site" evidence="1">
    <location>
        <position position="123"/>
    </location>
    <ligand>
        <name>substrate</name>
    </ligand>
</feature>
<feature type="binding site" evidence="1">
    <location>
        <position position="127"/>
    </location>
    <ligand>
        <name>substrate</name>
    </ligand>
</feature>
<feature type="binding site" evidence="1">
    <location>
        <position position="131"/>
    </location>
    <ligand>
        <name>substrate</name>
    </ligand>
</feature>
<feature type="binding site" evidence="1">
    <location>
        <begin position="140"/>
        <end position="141"/>
    </location>
    <ligand>
        <name>FMN</name>
        <dbReference type="ChEBI" id="CHEBI:58210"/>
    </ligand>
</feature>
<feature type="binding site" evidence="1">
    <location>
        <position position="184"/>
    </location>
    <ligand>
        <name>FMN</name>
        <dbReference type="ChEBI" id="CHEBI:58210"/>
    </ligand>
</feature>
<feature type="binding site" evidence="1">
    <location>
        <begin position="190"/>
        <end position="192"/>
    </location>
    <ligand>
        <name>substrate</name>
    </ligand>
</feature>
<feature type="binding site" evidence="1">
    <location>
        <position position="194"/>
    </location>
    <ligand>
        <name>FMN</name>
        <dbReference type="ChEBI" id="CHEBI:58210"/>
    </ligand>
</feature>
<protein>
    <recommendedName>
        <fullName evidence="1">Pyridoxine/pyridoxamine 5'-phosphate oxidase</fullName>
        <ecNumber evidence="1">1.4.3.5</ecNumber>
    </recommendedName>
    <alternativeName>
        <fullName evidence="1">PNP/PMP oxidase</fullName>
        <shortName evidence="1">PNPOx</shortName>
    </alternativeName>
    <alternativeName>
        <fullName evidence="1">Pyridoxal 5'-phosphate synthase</fullName>
    </alternativeName>
</protein>
<organism>
    <name type="scientific">Burkholderia lata (strain ATCC 17760 / DSM 23089 / LMG 22485 / NCIMB 9086 / R18194 / 383)</name>
    <dbReference type="NCBI Taxonomy" id="482957"/>
    <lineage>
        <taxon>Bacteria</taxon>
        <taxon>Pseudomonadati</taxon>
        <taxon>Pseudomonadota</taxon>
        <taxon>Betaproteobacteria</taxon>
        <taxon>Burkholderiales</taxon>
        <taxon>Burkholderiaceae</taxon>
        <taxon>Burkholderia</taxon>
        <taxon>Burkholderia cepacia complex</taxon>
    </lineage>
</organism>
<comment type="function">
    <text evidence="1">Catalyzes the oxidation of either pyridoxine 5'-phosphate (PNP) or pyridoxamine 5'-phosphate (PMP) into pyridoxal 5'-phosphate (PLP).</text>
</comment>
<comment type="catalytic activity">
    <reaction evidence="1">
        <text>pyridoxamine 5'-phosphate + O2 + H2O = pyridoxal 5'-phosphate + H2O2 + NH4(+)</text>
        <dbReference type="Rhea" id="RHEA:15817"/>
        <dbReference type="ChEBI" id="CHEBI:15377"/>
        <dbReference type="ChEBI" id="CHEBI:15379"/>
        <dbReference type="ChEBI" id="CHEBI:16240"/>
        <dbReference type="ChEBI" id="CHEBI:28938"/>
        <dbReference type="ChEBI" id="CHEBI:58451"/>
        <dbReference type="ChEBI" id="CHEBI:597326"/>
        <dbReference type="EC" id="1.4.3.5"/>
    </reaction>
</comment>
<comment type="catalytic activity">
    <reaction evidence="1">
        <text>pyridoxine 5'-phosphate + O2 = pyridoxal 5'-phosphate + H2O2</text>
        <dbReference type="Rhea" id="RHEA:15149"/>
        <dbReference type="ChEBI" id="CHEBI:15379"/>
        <dbReference type="ChEBI" id="CHEBI:16240"/>
        <dbReference type="ChEBI" id="CHEBI:58589"/>
        <dbReference type="ChEBI" id="CHEBI:597326"/>
        <dbReference type="EC" id="1.4.3.5"/>
    </reaction>
</comment>
<comment type="cofactor">
    <cofactor evidence="1">
        <name>FMN</name>
        <dbReference type="ChEBI" id="CHEBI:58210"/>
    </cofactor>
    <text evidence="1">Binds 1 FMN per subunit.</text>
</comment>
<comment type="pathway">
    <text evidence="1">Cofactor metabolism; pyridoxal 5'-phosphate salvage; pyridoxal 5'-phosphate from pyridoxamine 5'-phosphate: step 1/1.</text>
</comment>
<comment type="pathway">
    <text evidence="1">Cofactor metabolism; pyridoxal 5'-phosphate salvage; pyridoxal 5'-phosphate from pyridoxine 5'-phosphate: step 1/1.</text>
</comment>
<comment type="subunit">
    <text evidence="1">Homodimer.</text>
</comment>
<comment type="similarity">
    <text evidence="1">Belongs to the pyridoxamine 5'-phosphate oxidase family.</text>
</comment>
<evidence type="ECO:0000255" key="1">
    <source>
        <dbReference type="HAMAP-Rule" id="MF_01629"/>
    </source>
</evidence>
<dbReference type="EC" id="1.4.3.5" evidence="1"/>
<dbReference type="EMBL" id="CP000151">
    <property type="protein sequence ID" value="ABB09494.1"/>
    <property type="molecule type" value="Genomic_DNA"/>
</dbReference>
<dbReference type="RefSeq" id="WP_011353011.1">
    <property type="nucleotide sequence ID" value="NC_007510.1"/>
</dbReference>
<dbReference type="SMR" id="Q39DH2"/>
<dbReference type="GeneID" id="45095783"/>
<dbReference type="KEGG" id="bur:Bcep18194_A5900"/>
<dbReference type="PATRIC" id="fig|482957.22.peg.2892"/>
<dbReference type="HOGENOM" id="CLU_032263_2_2_4"/>
<dbReference type="UniPathway" id="UPA01068">
    <property type="reaction ID" value="UER00304"/>
</dbReference>
<dbReference type="UniPathway" id="UPA01068">
    <property type="reaction ID" value="UER00305"/>
</dbReference>
<dbReference type="Proteomes" id="UP000002705">
    <property type="component" value="Chromosome 1"/>
</dbReference>
<dbReference type="GO" id="GO:0010181">
    <property type="term" value="F:FMN binding"/>
    <property type="evidence" value="ECO:0007669"/>
    <property type="project" value="UniProtKB-UniRule"/>
</dbReference>
<dbReference type="GO" id="GO:0004733">
    <property type="term" value="F:pyridoxamine phosphate oxidase activity"/>
    <property type="evidence" value="ECO:0007669"/>
    <property type="project" value="UniProtKB-UniRule"/>
</dbReference>
<dbReference type="GO" id="GO:0008615">
    <property type="term" value="P:pyridoxine biosynthetic process"/>
    <property type="evidence" value="ECO:0007669"/>
    <property type="project" value="UniProtKB-KW"/>
</dbReference>
<dbReference type="FunFam" id="2.30.110.10:FF:000005">
    <property type="entry name" value="NAD(P)H-hydrate epimerase"/>
    <property type="match status" value="1"/>
</dbReference>
<dbReference type="Gene3D" id="2.30.110.10">
    <property type="entry name" value="Electron Transport, Fmn-binding Protein, Chain A"/>
    <property type="match status" value="1"/>
</dbReference>
<dbReference type="HAMAP" id="MF_01629">
    <property type="entry name" value="PdxH"/>
    <property type="match status" value="1"/>
</dbReference>
<dbReference type="InterPro" id="IPR000659">
    <property type="entry name" value="Pyridox_Oxase"/>
</dbReference>
<dbReference type="InterPro" id="IPR019740">
    <property type="entry name" value="Pyridox_Oxase_CS"/>
</dbReference>
<dbReference type="InterPro" id="IPR011576">
    <property type="entry name" value="Pyridox_Oxase_N"/>
</dbReference>
<dbReference type="InterPro" id="IPR019576">
    <property type="entry name" value="Pyridoxamine_oxidase_dimer_C"/>
</dbReference>
<dbReference type="InterPro" id="IPR012349">
    <property type="entry name" value="Split_barrel_FMN-bd"/>
</dbReference>
<dbReference type="NCBIfam" id="TIGR00558">
    <property type="entry name" value="pdxH"/>
    <property type="match status" value="1"/>
</dbReference>
<dbReference type="NCBIfam" id="NF004231">
    <property type="entry name" value="PRK05679.1"/>
    <property type="match status" value="1"/>
</dbReference>
<dbReference type="PANTHER" id="PTHR10851:SF0">
    <property type="entry name" value="PYRIDOXINE-5'-PHOSPHATE OXIDASE"/>
    <property type="match status" value="1"/>
</dbReference>
<dbReference type="PANTHER" id="PTHR10851">
    <property type="entry name" value="PYRIDOXINE-5-PHOSPHATE OXIDASE"/>
    <property type="match status" value="1"/>
</dbReference>
<dbReference type="Pfam" id="PF10590">
    <property type="entry name" value="PNP_phzG_C"/>
    <property type="match status" value="1"/>
</dbReference>
<dbReference type="Pfam" id="PF01243">
    <property type="entry name" value="PNPOx_N"/>
    <property type="match status" value="1"/>
</dbReference>
<dbReference type="PIRSF" id="PIRSF000190">
    <property type="entry name" value="Pyd_amn-ph_oxd"/>
    <property type="match status" value="1"/>
</dbReference>
<dbReference type="SUPFAM" id="SSF50475">
    <property type="entry name" value="FMN-binding split barrel"/>
    <property type="match status" value="1"/>
</dbReference>
<dbReference type="PROSITE" id="PS01064">
    <property type="entry name" value="PYRIDOX_OXIDASE"/>
    <property type="match status" value="1"/>
</dbReference>
<proteinExistence type="inferred from homology"/>
<name>PDXH_BURL3</name>